<accession>Q8K984</accession>
<comment type="catalytic activity">
    <reaction>
        <text>ATP + H2O + xenobioticSide 1 = ADP + phosphate + xenobioticSide 2.</text>
        <dbReference type="EC" id="7.6.2.2"/>
    </reaction>
</comment>
<comment type="subcellular location">
    <subcellularLocation>
        <location evidence="3">Cell membrane</location>
        <topology evidence="2">Multi-pass membrane protein</topology>
    </subcellularLocation>
</comment>
<comment type="similarity">
    <text evidence="3">Belongs to the ABC transporter superfamily. Drug exporter-2 (TC 3.A.1.117) family.</text>
</comment>
<dbReference type="EC" id="7.6.2.2"/>
<dbReference type="EMBL" id="AE013218">
    <property type="protein sequence ID" value="AAM68008.1"/>
    <property type="molecule type" value="Genomic_DNA"/>
</dbReference>
<dbReference type="RefSeq" id="WP_011053975.1">
    <property type="nucleotide sequence ID" value="NC_004061.1"/>
</dbReference>
<dbReference type="SMR" id="Q8K984"/>
<dbReference type="STRING" id="198804.BUsg_465"/>
<dbReference type="GeneID" id="93003936"/>
<dbReference type="KEGG" id="bas:BUsg_465"/>
<dbReference type="eggNOG" id="COG1132">
    <property type="taxonomic scope" value="Bacteria"/>
</dbReference>
<dbReference type="HOGENOM" id="CLU_000604_84_3_6"/>
<dbReference type="Proteomes" id="UP000000416">
    <property type="component" value="Chromosome"/>
</dbReference>
<dbReference type="GO" id="GO:0005886">
    <property type="term" value="C:plasma membrane"/>
    <property type="evidence" value="ECO:0007669"/>
    <property type="project" value="UniProtKB-SubCell"/>
</dbReference>
<dbReference type="GO" id="GO:0015421">
    <property type="term" value="F:ABC-type oligopeptide transporter activity"/>
    <property type="evidence" value="ECO:0007669"/>
    <property type="project" value="TreeGrafter"/>
</dbReference>
<dbReference type="GO" id="GO:0008559">
    <property type="term" value="F:ABC-type xenobiotic transporter activity"/>
    <property type="evidence" value="ECO:0007669"/>
    <property type="project" value="UniProtKB-EC"/>
</dbReference>
<dbReference type="GO" id="GO:0005524">
    <property type="term" value="F:ATP binding"/>
    <property type="evidence" value="ECO:0007669"/>
    <property type="project" value="UniProtKB-KW"/>
</dbReference>
<dbReference type="GO" id="GO:0016887">
    <property type="term" value="F:ATP hydrolysis activity"/>
    <property type="evidence" value="ECO:0007669"/>
    <property type="project" value="InterPro"/>
</dbReference>
<dbReference type="CDD" id="cd18544">
    <property type="entry name" value="ABC_6TM_TmrA_like"/>
    <property type="match status" value="1"/>
</dbReference>
<dbReference type="FunFam" id="3.40.50.300:FF:000604">
    <property type="entry name" value="ABC transporter B family member 28"/>
    <property type="match status" value="1"/>
</dbReference>
<dbReference type="Gene3D" id="1.20.1560.10">
    <property type="entry name" value="ABC transporter type 1, transmembrane domain"/>
    <property type="match status" value="1"/>
</dbReference>
<dbReference type="Gene3D" id="3.40.50.300">
    <property type="entry name" value="P-loop containing nucleotide triphosphate hydrolases"/>
    <property type="match status" value="1"/>
</dbReference>
<dbReference type="InterPro" id="IPR003593">
    <property type="entry name" value="AAA+_ATPase"/>
</dbReference>
<dbReference type="InterPro" id="IPR011527">
    <property type="entry name" value="ABC1_TM_dom"/>
</dbReference>
<dbReference type="InterPro" id="IPR036640">
    <property type="entry name" value="ABC1_TM_sf"/>
</dbReference>
<dbReference type="InterPro" id="IPR003439">
    <property type="entry name" value="ABC_transporter-like_ATP-bd"/>
</dbReference>
<dbReference type="InterPro" id="IPR017871">
    <property type="entry name" value="ABC_transporter-like_CS"/>
</dbReference>
<dbReference type="InterPro" id="IPR027417">
    <property type="entry name" value="P-loop_NTPase"/>
</dbReference>
<dbReference type="InterPro" id="IPR039421">
    <property type="entry name" value="Type_1_exporter"/>
</dbReference>
<dbReference type="NCBIfam" id="NF008056">
    <property type="entry name" value="PRK10790.1"/>
    <property type="match status" value="1"/>
</dbReference>
<dbReference type="PANTHER" id="PTHR43394:SF1">
    <property type="entry name" value="ATP-BINDING CASSETTE SUB-FAMILY B MEMBER 10, MITOCHONDRIAL"/>
    <property type="match status" value="1"/>
</dbReference>
<dbReference type="PANTHER" id="PTHR43394">
    <property type="entry name" value="ATP-DEPENDENT PERMEASE MDL1, MITOCHONDRIAL"/>
    <property type="match status" value="1"/>
</dbReference>
<dbReference type="Pfam" id="PF00664">
    <property type="entry name" value="ABC_membrane"/>
    <property type="match status" value="1"/>
</dbReference>
<dbReference type="Pfam" id="PF00005">
    <property type="entry name" value="ABC_tran"/>
    <property type="match status" value="1"/>
</dbReference>
<dbReference type="SMART" id="SM00382">
    <property type="entry name" value="AAA"/>
    <property type="match status" value="1"/>
</dbReference>
<dbReference type="SUPFAM" id="SSF90123">
    <property type="entry name" value="ABC transporter transmembrane region"/>
    <property type="match status" value="1"/>
</dbReference>
<dbReference type="SUPFAM" id="SSF52540">
    <property type="entry name" value="P-loop containing nucleoside triphosphate hydrolases"/>
    <property type="match status" value="1"/>
</dbReference>
<dbReference type="PROSITE" id="PS50929">
    <property type="entry name" value="ABC_TM1F"/>
    <property type="match status" value="1"/>
</dbReference>
<dbReference type="PROSITE" id="PS00211">
    <property type="entry name" value="ABC_TRANSPORTER_1"/>
    <property type="match status" value="1"/>
</dbReference>
<dbReference type="PROSITE" id="PS50893">
    <property type="entry name" value="ABC_TRANSPORTER_2"/>
    <property type="match status" value="1"/>
</dbReference>
<keyword id="KW-0067">ATP-binding</keyword>
<keyword id="KW-1003">Cell membrane</keyword>
<keyword id="KW-0472">Membrane</keyword>
<keyword id="KW-0547">Nucleotide-binding</keyword>
<keyword id="KW-1278">Translocase</keyword>
<keyword id="KW-0812">Transmembrane</keyword>
<keyword id="KW-1133">Transmembrane helix</keyword>
<keyword id="KW-0813">Transport</keyword>
<gene>
    <name type="primary">mdlB</name>
    <name type="ordered locus">BUsg_465</name>
</gene>
<protein>
    <recommendedName>
        <fullName>Multidrug resistance-like ATP-binding protein MdlB</fullName>
        <ecNumber>7.6.2.2</ecNumber>
    </recommendedName>
</protein>
<reference key="1">
    <citation type="journal article" date="2002" name="Science">
        <title>50 million years of genomic stasis in endosymbiotic bacteria.</title>
        <authorList>
            <person name="Tamas I."/>
            <person name="Klasson L."/>
            <person name="Canbaeck B."/>
            <person name="Naeslund A.K."/>
            <person name="Eriksson A.-S."/>
            <person name="Wernegreen J.J."/>
            <person name="Sandstroem J.P."/>
            <person name="Moran N.A."/>
            <person name="Andersson S.G.E."/>
        </authorList>
    </citation>
    <scope>NUCLEOTIDE SEQUENCE [LARGE SCALE GENOMIC DNA]</scope>
    <source>
        <strain>Sg</strain>
    </source>
</reference>
<name>MDLB_BUCAP</name>
<feature type="chain" id="PRO_0000092500" description="Multidrug resistance-like ATP-binding protein MdlB">
    <location>
        <begin position="1"/>
        <end position="580"/>
    </location>
</feature>
<feature type="transmembrane region" description="Helical" evidence="2">
    <location>
        <begin position="26"/>
        <end position="46"/>
    </location>
</feature>
<feature type="transmembrane region" description="Helical" evidence="2">
    <location>
        <begin position="61"/>
        <end position="81"/>
    </location>
</feature>
<feature type="transmembrane region" description="Helical" evidence="2">
    <location>
        <begin position="142"/>
        <end position="162"/>
    </location>
</feature>
<feature type="transmembrane region" description="Helical" evidence="2">
    <location>
        <begin position="165"/>
        <end position="185"/>
    </location>
</feature>
<feature type="transmembrane region" description="Helical" evidence="2">
    <location>
        <begin position="258"/>
        <end position="278"/>
    </location>
</feature>
<feature type="domain" description="ABC transmembrane type-1" evidence="2">
    <location>
        <begin position="25"/>
        <end position="310"/>
    </location>
</feature>
<feature type="domain" description="ABC transporter" evidence="1">
    <location>
        <begin position="341"/>
        <end position="575"/>
    </location>
</feature>
<feature type="binding site" evidence="1">
    <location>
        <begin position="375"/>
        <end position="382"/>
    </location>
    <ligand>
        <name>ATP</name>
        <dbReference type="ChEBI" id="CHEBI:30616"/>
    </ligand>
</feature>
<proteinExistence type="inferred from homology"/>
<sequence>MDHLIQFWPILKRLIIYAIPWKKKIILAFFLLLSGATSEVLGPILISYFINNILSQHQLNFQLILIIIVIFIMLQILAVFFNYFQSILFNKIAVGIVNKLRNDVMKAALNQPISEFDSQPIGQMISKVTNDTEVIKELYDTVGPTFFRSITLIIIILFAMFTLEWHMAIITIFIIPLVIIVMSIYQYYSTPLLRNVRYYVANINNKFNETINGMNVIQQFRQQTRFENNIKESSELHYLARMKILKLDGFLLRPLLSLLSALVLCSFMFLFSYFSIGVYEVGVLYAFITYLGRLNEPLISITIQQSILQQAIVAGERIFSLIDSPKQKYGNNEEEIKSGKINIKNLSFKYKESGENILNNINIYIPSKSFVAFVGQTGSGKSTLANLLMGYYPIKHGKIYLDDKSINCISHDVLRKNILMVQQDPIVLADTFSSNITLGKKISEEKIWNVLKTVHLSSLVQSMPKGIYSILGEEGNNLSLGQKQLLAIARILVRNPKILILDEATANIDSGTEKLIQTTLSSIRAKTTLVVIAHRLSTVIEADMIVVLKKGKIVELGTHKQLLEKKGFYWKMYNFQLFNC</sequence>
<organism>
    <name type="scientific">Buchnera aphidicola subsp. Schizaphis graminum (strain Sg)</name>
    <dbReference type="NCBI Taxonomy" id="198804"/>
    <lineage>
        <taxon>Bacteria</taxon>
        <taxon>Pseudomonadati</taxon>
        <taxon>Pseudomonadota</taxon>
        <taxon>Gammaproteobacteria</taxon>
        <taxon>Enterobacterales</taxon>
        <taxon>Erwiniaceae</taxon>
        <taxon>Buchnera</taxon>
    </lineage>
</organism>
<evidence type="ECO:0000255" key="1">
    <source>
        <dbReference type="PROSITE-ProRule" id="PRU00434"/>
    </source>
</evidence>
<evidence type="ECO:0000255" key="2">
    <source>
        <dbReference type="PROSITE-ProRule" id="PRU00441"/>
    </source>
</evidence>
<evidence type="ECO:0000305" key="3"/>